<feature type="chain" id="PRO_0000241845" description="Orotidine 5'-phosphate decarboxylase">
    <location>
        <begin position="1"/>
        <end position="238"/>
    </location>
</feature>
<feature type="active site" description="Proton donor" evidence="1">
    <location>
        <position position="61"/>
    </location>
</feature>
<feature type="binding site" evidence="1">
    <location>
        <position position="10"/>
    </location>
    <ligand>
        <name>substrate</name>
    </ligand>
</feature>
<feature type="binding site" evidence="1">
    <location>
        <position position="32"/>
    </location>
    <ligand>
        <name>substrate</name>
    </ligand>
</feature>
<feature type="binding site" evidence="1">
    <location>
        <begin position="59"/>
        <end position="68"/>
    </location>
    <ligand>
        <name>substrate</name>
    </ligand>
</feature>
<feature type="binding site" evidence="1">
    <location>
        <position position="122"/>
    </location>
    <ligand>
        <name>substrate</name>
    </ligand>
</feature>
<feature type="binding site" evidence="1">
    <location>
        <position position="184"/>
    </location>
    <ligand>
        <name>substrate</name>
    </ligand>
</feature>
<feature type="binding site" evidence="1">
    <location>
        <position position="193"/>
    </location>
    <ligand>
        <name>substrate</name>
    </ligand>
</feature>
<feature type="binding site" evidence="1">
    <location>
        <position position="213"/>
    </location>
    <ligand>
        <name>substrate</name>
    </ligand>
</feature>
<feature type="binding site" evidence="1">
    <location>
        <position position="214"/>
    </location>
    <ligand>
        <name>substrate</name>
    </ligand>
</feature>
<name>PYRF_BACCZ</name>
<dbReference type="EC" id="4.1.1.23" evidence="1"/>
<dbReference type="EMBL" id="CP000001">
    <property type="protein sequence ID" value="AAU16624.1"/>
    <property type="molecule type" value="Genomic_DNA"/>
</dbReference>
<dbReference type="RefSeq" id="WP_000083499.1">
    <property type="nucleotide sequence ID" value="NC_006274.1"/>
</dbReference>
<dbReference type="SMR" id="Q636E3"/>
<dbReference type="KEGG" id="bcz:BCE33L3642"/>
<dbReference type="PATRIC" id="fig|288681.22.peg.1769"/>
<dbReference type="UniPathway" id="UPA00070">
    <property type="reaction ID" value="UER00120"/>
</dbReference>
<dbReference type="Proteomes" id="UP000002612">
    <property type="component" value="Chromosome"/>
</dbReference>
<dbReference type="GO" id="GO:0005829">
    <property type="term" value="C:cytosol"/>
    <property type="evidence" value="ECO:0007669"/>
    <property type="project" value="TreeGrafter"/>
</dbReference>
<dbReference type="GO" id="GO:0004590">
    <property type="term" value="F:orotidine-5'-phosphate decarboxylase activity"/>
    <property type="evidence" value="ECO:0007669"/>
    <property type="project" value="UniProtKB-UniRule"/>
</dbReference>
<dbReference type="GO" id="GO:0006207">
    <property type="term" value="P:'de novo' pyrimidine nucleobase biosynthetic process"/>
    <property type="evidence" value="ECO:0007669"/>
    <property type="project" value="InterPro"/>
</dbReference>
<dbReference type="GO" id="GO:0044205">
    <property type="term" value="P:'de novo' UMP biosynthetic process"/>
    <property type="evidence" value="ECO:0007669"/>
    <property type="project" value="UniProtKB-UniRule"/>
</dbReference>
<dbReference type="CDD" id="cd04725">
    <property type="entry name" value="OMP_decarboxylase_like"/>
    <property type="match status" value="1"/>
</dbReference>
<dbReference type="FunFam" id="3.20.20.70:FF:000015">
    <property type="entry name" value="Orotidine 5'-phosphate decarboxylase"/>
    <property type="match status" value="1"/>
</dbReference>
<dbReference type="Gene3D" id="3.20.20.70">
    <property type="entry name" value="Aldolase class I"/>
    <property type="match status" value="1"/>
</dbReference>
<dbReference type="HAMAP" id="MF_01200_B">
    <property type="entry name" value="OMPdecase_type1_B"/>
    <property type="match status" value="1"/>
</dbReference>
<dbReference type="InterPro" id="IPR013785">
    <property type="entry name" value="Aldolase_TIM"/>
</dbReference>
<dbReference type="InterPro" id="IPR014732">
    <property type="entry name" value="OMPdecase"/>
</dbReference>
<dbReference type="InterPro" id="IPR018089">
    <property type="entry name" value="OMPdecase_AS"/>
</dbReference>
<dbReference type="InterPro" id="IPR047596">
    <property type="entry name" value="OMPdecase_bac"/>
</dbReference>
<dbReference type="InterPro" id="IPR001754">
    <property type="entry name" value="OMPdeCOase_dom"/>
</dbReference>
<dbReference type="InterPro" id="IPR011060">
    <property type="entry name" value="RibuloseP-bd_barrel"/>
</dbReference>
<dbReference type="NCBIfam" id="NF001273">
    <property type="entry name" value="PRK00230.1"/>
    <property type="match status" value="1"/>
</dbReference>
<dbReference type="NCBIfam" id="TIGR01740">
    <property type="entry name" value="pyrF"/>
    <property type="match status" value="1"/>
</dbReference>
<dbReference type="PANTHER" id="PTHR32119">
    <property type="entry name" value="OROTIDINE 5'-PHOSPHATE DECARBOXYLASE"/>
    <property type="match status" value="1"/>
</dbReference>
<dbReference type="PANTHER" id="PTHR32119:SF2">
    <property type="entry name" value="OROTIDINE 5'-PHOSPHATE DECARBOXYLASE"/>
    <property type="match status" value="1"/>
</dbReference>
<dbReference type="Pfam" id="PF00215">
    <property type="entry name" value="OMPdecase"/>
    <property type="match status" value="1"/>
</dbReference>
<dbReference type="SMART" id="SM00934">
    <property type="entry name" value="OMPdecase"/>
    <property type="match status" value="1"/>
</dbReference>
<dbReference type="SUPFAM" id="SSF51366">
    <property type="entry name" value="Ribulose-phoshate binding barrel"/>
    <property type="match status" value="1"/>
</dbReference>
<dbReference type="PROSITE" id="PS00156">
    <property type="entry name" value="OMPDECASE"/>
    <property type="match status" value="1"/>
</dbReference>
<comment type="function">
    <text evidence="1">Catalyzes the decarboxylation of orotidine 5'-monophosphate (OMP) to uridine 5'-monophosphate (UMP).</text>
</comment>
<comment type="catalytic activity">
    <reaction evidence="1">
        <text>orotidine 5'-phosphate + H(+) = UMP + CO2</text>
        <dbReference type="Rhea" id="RHEA:11596"/>
        <dbReference type="ChEBI" id="CHEBI:15378"/>
        <dbReference type="ChEBI" id="CHEBI:16526"/>
        <dbReference type="ChEBI" id="CHEBI:57538"/>
        <dbReference type="ChEBI" id="CHEBI:57865"/>
        <dbReference type="EC" id="4.1.1.23"/>
    </reaction>
</comment>
<comment type="pathway">
    <text evidence="1">Pyrimidine metabolism; UMP biosynthesis via de novo pathway; UMP from orotate: step 2/2.</text>
</comment>
<comment type="subunit">
    <text evidence="1">Homodimer.</text>
</comment>
<comment type="similarity">
    <text evidence="1">Belongs to the OMP decarboxylase family. Type 1 subfamily.</text>
</comment>
<reference key="1">
    <citation type="journal article" date="2006" name="J. Bacteriol.">
        <title>Pathogenomic sequence analysis of Bacillus cereus and Bacillus thuringiensis isolates closely related to Bacillus anthracis.</title>
        <authorList>
            <person name="Han C.S."/>
            <person name="Xie G."/>
            <person name="Challacombe J.F."/>
            <person name="Altherr M.R."/>
            <person name="Bhotika S.S."/>
            <person name="Bruce D."/>
            <person name="Campbell C.S."/>
            <person name="Campbell M.L."/>
            <person name="Chen J."/>
            <person name="Chertkov O."/>
            <person name="Cleland C."/>
            <person name="Dimitrijevic M."/>
            <person name="Doggett N.A."/>
            <person name="Fawcett J.J."/>
            <person name="Glavina T."/>
            <person name="Goodwin L.A."/>
            <person name="Hill K.K."/>
            <person name="Hitchcock P."/>
            <person name="Jackson P.J."/>
            <person name="Keim P."/>
            <person name="Kewalramani A.R."/>
            <person name="Longmire J."/>
            <person name="Lucas S."/>
            <person name="Malfatti S."/>
            <person name="McMurry K."/>
            <person name="Meincke L.J."/>
            <person name="Misra M."/>
            <person name="Moseman B.L."/>
            <person name="Mundt M."/>
            <person name="Munk A.C."/>
            <person name="Okinaka R.T."/>
            <person name="Parson-Quintana B."/>
            <person name="Reilly L.P."/>
            <person name="Richardson P."/>
            <person name="Robinson D.L."/>
            <person name="Rubin E."/>
            <person name="Saunders E."/>
            <person name="Tapia R."/>
            <person name="Tesmer J.G."/>
            <person name="Thayer N."/>
            <person name="Thompson L.S."/>
            <person name="Tice H."/>
            <person name="Ticknor L.O."/>
            <person name="Wills P.L."/>
            <person name="Brettin T.S."/>
            <person name="Gilna P."/>
        </authorList>
    </citation>
    <scope>NUCLEOTIDE SEQUENCE [LARGE SCALE GENOMIC DNA]</scope>
    <source>
        <strain>ZK / E33L</strain>
    </source>
</reference>
<evidence type="ECO:0000255" key="1">
    <source>
        <dbReference type="HAMAP-Rule" id="MF_01200"/>
    </source>
</evidence>
<accession>Q636E3</accession>
<keyword id="KW-0210">Decarboxylase</keyword>
<keyword id="KW-0456">Lyase</keyword>
<keyword id="KW-0665">Pyrimidine biosynthesis</keyword>
<sequence>MSQSLIVALDFPGKQDVEQFLRHFEGEELFVKVGMELFYKEGPAIITYLKEKGHKIFLDLKLHDIPNTVKSAMRSLASLDVDMVNVHAAGGSSMMKAAIEGLEEGKQEGKERPICIAVTQLTSTSEAMMKKEIGIEKTLEEAVAHYAKLTKESGLDGVVCSTLEVPKLREVCGSEFVTVTPGIRLASDDVNDQVRVATPKRARELGSSYIVVGRSITKAENPLEAYKTVKQQWEGVTV</sequence>
<organism>
    <name type="scientific">Bacillus cereus (strain ZK / E33L)</name>
    <dbReference type="NCBI Taxonomy" id="288681"/>
    <lineage>
        <taxon>Bacteria</taxon>
        <taxon>Bacillati</taxon>
        <taxon>Bacillota</taxon>
        <taxon>Bacilli</taxon>
        <taxon>Bacillales</taxon>
        <taxon>Bacillaceae</taxon>
        <taxon>Bacillus</taxon>
        <taxon>Bacillus cereus group</taxon>
    </lineage>
</organism>
<proteinExistence type="inferred from homology"/>
<protein>
    <recommendedName>
        <fullName evidence="1">Orotidine 5'-phosphate decarboxylase</fullName>
        <ecNumber evidence="1">4.1.1.23</ecNumber>
    </recommendedName>
    <alternativeName>
        <fullName evidence="1">OMP decarboxylase</fullName>
        <shortName evidence="1">OMPDCase</shortName>
        <shortName evidence="1">OMPdecase</shortName>
    </alternativeName>
</protein>
<gene>
    <name evidence="1" type="primary">pyrF</name>
    <name type="ordered locus">BCE33L3642</name>
</gene>